<reference key="1">
    <citation type="journal article" date="1998" name="Microbiology">
        <title>A 28 kbp segment from the spoVM region of the Bacillus subtilis 168 genome.</title>
        <authorList>
            <person name="Foulger D."/>
            <person name="Errington J."/>
        </authorList>
    </citation>
    <scope>NUCLEOTIDE SEQUENCE [GENOMIC DNA]</scope>
    <source>
        <strain>168</strain>
    </source>
</reference>
<reference key="2">
    <citation type="journal article" date="1997" name="Nature">
        <title>The complete genome sequence of the Gram-positive bacterium Bacillus subtilis.</title>
        <authorList>
            <person name="Kunst F."/>
            <person name="Ogasawara N."/>
            <person name="Moszer I."/>
            <person name="Albertini A.M."/>
            <person name="Alloni G."/>
            <person name="Azevedo V."/>
            <person name="Bertero M.G."/>
            <person name="Bessieres P."/>
            <person name="Bolotin A."/>
            <person name="Borchert S."/>
            <person name="Borriss R."/>
            <person name="Boursier L."/>
            <person name="Brans A."/>
            <person name="Braun M."/>
            <person name="Brignell S.C."/>
            <person name="Bron S."/>
            <person name="Brouillet S."/>
            <person name="Bruschi C.V."/>
            <person name="Caldwell B."/>
            <person name="Capuano V."/>
            <person name="Carter N.M."/>
            <person name="Choi S.-K."/>
            <person name="Codani J.-J."/>
            <person name="Connerton I.F."/>
            <person name="Cummings N.J."/>
            <person name="Daniel R.A."/>
            <person name="Denizot F."/>
            <person name="Devine K.M."/>
            <person name="Duesterhoeft A."/>
            <person name="Ehrlich S.D."/>
            <person name="Emmerson P.T."/>
            <person name="Entian K.-D."/>
            <person name="Errington J."/>
            <person name="Fabret C."/>
            <person name="Ferrari E."/>
            <person name="Foulger D."/>
            <person name="Fritz C."/>
            <person name="Fujita M."/>
            <person name="Fujita Y."/>
            <person name="Fuma S."/>
            <person name="Galizzi A."/>
            <person name="Galleron N."/>
            <person name="Ghim S.-Y."/>
            <person name="Glaser P."/>
            <person name="Goffeau A."/>
            <person name="Golightly E.J."/>
            <person name="Grandi G."/>
            <person name="Guiseppi G."/>
            <person name="Guy B.J."/>
            <person name="Haga K."/>
            <person name="Haiech J."/>
            <person name="Harwood C.R."/>
            <person name="Henaut A."/>
            <person name="Hilbert H."/>
            <person name="Holsappel S."/>
            <person name="Hosono S."/>
            <person name="Hullo M.-F."/>
            <person name="Itaya M."/>
            <person name="Jones L.-M."/>
            <person name="Joris B."/>
            <person name="Karamata D."/>
            <person name="Kasahara Y."/>
            <person name="Klaerr-Blanchard M."/>
            <person name="Klein C."/>
            <person name="Kobayashi Y."/>
            <person name="Koetter P."/>
            <person name="Koningstein G."/>
            <person name="Krogh S."/>
            <person name="Kumano M."/>
            <person name="Kurita K."/>
            <person name="Lapidus A."/>
            <person name="Lardinois S."/>
            <person name="Lauber J."/>
            <person name="Lazarevic V."/>
            <person name="Lee S.-M."/>
            <person name="Levine A."/>
            <person name="Liu H."/>
            <person name="Masuda S."/>
            <person name="Mauel C."/>
            <person name="Medigue C."/>
            <person name="Medina N."/>
            <person name="Mellado R.P."/>
            <person name="Mizuno M."/>
            <person name="Moestl D."/>
            <person name="Nakai S."/>
            <person name="Noback M."/>
            <person name="Noone D."/>
            <person name="O'Reilly M."/>
            <person name="Ogawa K."/>
            <person name="Ogiwara A."/>
            <person name="Oudega B."/>
            <person name="Park S.-H."/>
            <person name="Parro V."/>
            <person name="Pohl T.M."/>
            <person name="Portetelle D."/>
            <person name="Porwollik S."/>
            <person name="Prescott A.M."/>
            <person name="Presecan E."/>
            <person name="Pujic P."/>
            <person name="Purnelle B."/>
            <person name="Rapoport G."/>
            <person name="Rey M."/>
            <person name="Reynolds S."/>
            <person name="Rieger M."/>
            <person name="Rivolta C."/>
            <person name="Rocha E."/>
            <person name="Roche B."/>
            <person name="Rose M."/>
            <person name="Sadaie Y."/>
            <person name="Sato T."/>
            <person name="Scanlan E."/>
            <person name="Schleich S."/>
            <person name="Schroeter R."/>
            <person name="Scoffone F."/>
            <person name="Sekiguchi J."/>
            <person name="Sekowska A."/>
            <person name="Seror S.J."/>
            <person name="Serror P."/>
            <person name="Shin B.-S."/>
            <person name="Soldo B."/>
            <person name="Sorokin A."/>
            <person name="Tacconi E."/>
            <person name="Takagi T."/>
            <person name="Takahashi H."/>
            <person name="Takemaru K."/>
            <person name="Takeuchi M."/>
            <person name="Tamakoshi A."/>
            <person name="Tanaka T."/>
            <person name="Terpstra P."/>
            <person name="Tognoni A."/>
            <person name="Tosato V."/>
            <person name="Uchiyama S."/>
            <person name="Vandenbol M."/>
            <person name="Vannier F."/>
            <person name="Vassarotti A."/>
            <person name="Viari A."/>
            <person name="Wambutt R."/>
            <person name="Wedler E."/>
            <person name="Wedler H."/>
            <person name="Weitzenegger T."/>
            <person name="Winters P."/>
            <person name="Wipat A."/>
            <person name="Yamamoto H."/>
            <person name="Yamane K."/>
            <person name="Yasumoto K."/>
            <person name="Yata K."/>
            <person name="Yoshida K."/>
            <person name="Yoshikawa H.-F."/>
            <person name="Zumstein E."/>
            <person name="Yoshikawa H."/>
            <person name="Danchin A."/>
        </authorList>
    </citation>
    <scope>NUCLEOTIDE SEQUENCE [LARGE SCALE GENOMIC DNA]</scope>
    <source>
        <strain>168</strain>
    </source>
</reference>
<reference key="3">
    <citation type="journal article" date="1997" name="J. Mol. Biol.">
        <title>A survey of polypeptide deformylase function throughout the eubacterial lineage.</title>
        <authorList>
            <person name="Mazel D."/>
            <person name="Coic E."/>
            <person name="Blanchard S."/>
            <person name="Saurin W."/>
            <person name="Marliere P."/>
        </authorList>
    </citation>
    <scope>NUCLEOTIDE SEQUENCE [GENOMIC DNA] OF 1-240</scope>
    <source>
        <strain>168</strain>
    </source>
</reference>
<gene>
    <name evidence="4" type="primary">rsmB</name>
    <name type="synonym">sun</name>
    <name type="synonym">yloM</name>
    <name type="ordered locus">BSU15740</name>
</gene>
<feature type="chain" id="PRO_0000211815" description="Probable ribosomal RNA small subunit methyltransferase B">
    <location>
        <begin position="1"/>
        <end position="447"/>
    </location>
</feature>
<feature type="active site" description="Nucleophile" evidence="2">
    <location>
        <position position="382"/>
    </location>
</feature>
<feature type="binding site" evidence="2">
    <location>
        <begin position="259"/>
        <end position="265"/>
    </location>
    <ligand>
        <name>S-adenosyl-L-methionine</name>
        <dbReference type="ChEBI" id="CHEBI:59789"/>
    </ligand>
</feature>
<feature type="binding site" evidence="2">
    <location>
        <position position="283"/>
    </location>
    <ligand>
        <name>S-adenosyl-L-methionine</name>
        <dbReference type="ChEBI" id="CHEBI:59789"/>
    </ligand>
</feature>
<feature type="binding site" evidence="2">
    <location>
        <position position="310"/>
    </location>
    <ligand>
        <name>S-adenosyl-L-methionine</name>
        <dbReference type="ChEBI" id="CHEBI:59789"/>
    </ligand>
</feature>
<feature type="binding site" evidence="2">
    <location>
        <position position="329"/>
    </location>
    <ligand>
        <name>S-adenosyl-L-methionine</name>
        <dbReference type="ChEBI" id="CHEBI:59789"/>
    </ligand>
</feature>
<name>RSMB_BACSU</name>
<evidence type="ECO:0000250" key="1">
    <source>
        <dbReference type="UniProtKB" id="P36929"/>
    </source>
</evidence>
<evidence type="ECO:0000255" key="2">
    <source>
        <dbReference type="PROSITE-ProRule" id="PRU01023"/>
    </source>
</evidence>
<evidence type="ECO:0000305" key="3"/>
<evidence type="ECO:0000312" key="4">
    <source>
        <dbReference type="EMBL" id="CAB13447.1"/>
    </source>
</evidence>
<organism>
    <name type="scientific">Bacillus subtilis (strain 168)</name>
    <dbReference type="NCBI Taxonomy" id="224308"/>
    <lineage>
        <taxon>Bacteria</taxon>
        <taxon>Bacillati</taxon>
        <taxon>Bacillota</taxon>
        <taxon>Bacilli</taxon>
        <taxon>Bacillales</taxon>
        <taxon>Bacillaceae</taxon>
        <taxon>Bacillus</taxon>
    </lineage>
</organism>
<comment type="function">
    <text evidence="1">Specifically methylates the cytosine at position 967 (m5C967) of 16S rRNA.</text>
</comment>
<comment type="catalytic activity">
    <reaction evidence="1">
        <text>cytidine(967) in 16S rRNA + S-adenosyl-L-methionine = 5-methylcytidine(967) in 16S rRNA + S-adenosyl-L-homocysteine + H(+)</text>
        <dbReference type="Rhea" id="RHEA:42748"/>
        <dbReference type="Rhea" id="RHEA-COMP:10219"/>
        <dbReference type="Rhea" id="RHEA-COMP:10220"/>
        <dbReference type="ChEBI" id="CHEBI:15378"/>
        <dbReference type="ChEBI" id="CHEBI:57856"/>
        <dbReference type="ChEBI" id="CHEBI:59789"/>
        <dbReference type="ChEBI" id="CHEBI:74483"/>
        <dbReference type="ChEBI" id="CHEBI:82748"/>
        <dbReference type="EC" id="2.1.1.176"/>
    </reaction>
</comment>
<comment type="subcellular location">
    <subcellularLocation>
        <location evidence="1">Cytoplasm</location>
    </subcellularLocation>
</comment>
<comment type="similarity">
    <text evidence="2">Belongs to the class I-like SAM-binding methyltransferase superfamily. RsmB/NOP family.</text>
</comment>
<accession>P94464</accession>
<proteinExistence type="inferred from homology"/>
<dbReference type="EC" id="2.1.1.176" evidence="1"/>
<dbReference type="EMBL" id="Y13937">
    <property type="protein sequence ID" value="CAA74264.1"/>
    <property type="molecule type" value="Genomic_DNA"/>
</dbReference>
<dbReference type="EMBL" id="AL009126">
    <property type="protein sequence ID" value="CAB13447.1"/>
    <property type="molecule type" value="Genomic_DNA"/>
</dbReference>
<dbReference type="EMBL" id="Y10304">
    <property type="protein sequence ID" value="CAA71351.1"/>
    <property type="molecule type" value="Genomic_DNA"/>
</dbReference>
<dbReference type="PIR" id="E69878">
    <property type="entry name" value="E69878"/>
</dbReference>
<dbReference type="RefSeq" id="NP_389456.1">
    <property type="nucleotide sequence ID" value="NC_000964.3"/>
</dbReference>
<dbReference type="RefSeq" id="WP_003232068.1">
    <property type="nucleotide sequence ID" value="NZ_OZ025638.1"/>
</dbReference>
<dbReference type="SMR" id="P94464"/>
<dbReference type="FunCoup" id="P94464">
    <property type="interactions" value="585"/>
</dbReference>
<dbReference type="STRING" id="224308.BSU15740"/>
<dbReference type="PaxDb" id="224308-BSU15740"/>
<dbReference type="EnsemblBacteria" id="CAB13447">
    <property type="protein sequence ID" value="CAB13447"/>
    <property type="gene ID" value="BSU_15740"/>
</dbReference>
<dbReference type="GeneID" id="938106"/>
<dbReference type="KEGG" id="bsu:BSU15740"/>
<dbReference type="PATRIC" id="fig|224308.179.peg.1714"/>
<dbReference type="eggNOG" id="COG0144">
    <property type="taxonomic scope" value="Bacteria"/>
</dbReference>
<dbReference type="eggNOG" id="COG0781">
    <property type="taxonomic scope" value="Bacteria"/>
</dbReference>
<dbReference type="InParanoid" id="P94464"/>
<dbReference type="OrthoDB" id="9810297at2"/>
<dbReference type="PhylomeDB" id="P94464"/>
<dbReference type="BioCyc" id="BSUB:BSU15740-MONOMER"/>
<dbReference type="Proteomes" id="UP000001570">
    <property type="component" value="Chromosome"/>
</dbReference>
<dbReference type="GO" id="GO:0005737">
    <property type="term" value="C:cytoplasm"/>
    <property type="evidence" value="ECO:0007669"/>
    <property type="project" value="UniProtKB-SubCell"/>
</dbReference>
<dbReference type="GO" id="GO:0003723">
    <property type="term" value="F:RNA binding"/>
    <property type="evidence" value="ECO:0007669"/>
    <property type="project" value="UniProtKB-KW"/>
</dbReference>
<dbReference type="GO" id="GO:0008649">
    <property type="term" value="F:rRNA methyltransferase activity"/>
    <property type="evidence" value="ECO:0007669"/>
    <property type="project" value="InterPro"/>
</dbReference>
<dbReference type="GO" id="GO:0006355">
    <property type="term" value="P:regulation of DNA-templated transcription"/>
    <property type="evidence" value="ECO:0007669"/>
    <property type="project" value="InterPro"/>
</dbReference>
<dbReference type="GO" id="GO:0001510">
    <property type="term" value="P:RNA methylation"/>
    <property type="evidence" value="ECO:0000318"/>
    <property type="project" value="GO_Central"/>
</dbReference>
<dbReference type="CDD" id="cd02440">
    <property type="entry name" value="AdoMet_MTases"/>
    <property type="match status" value="1"/>
</dbReference>
<dbReference type="CDD" id="cd00620">
    <property type="entry name" value="Methyltransferase_Sun"/>
    <property type="match status" value="1"/>
</dbReference>
<dbReference type="FunFam" id="1.10.940.10:FF:000006">
    <property type="entry name" value="16S rRNA (Cytosine(967)-C(5))-methyltransferase RsmB"/>
    <property type="match status" value="1"/>
</dbReference>
<dbReference type="FunFam" id="3.30.70.1170:FF:000003">
    <property type="entry name" value="16S rRNA (Cytosine(967)-C(5))-methyltransferase RsmB"/>
    <property type="match status" value="1"/>
</dbReference>
<dbReference type="FunFam" id="3.40.50.150:FF:000257">
    <property type="entry name" value="16S rRNA methyltransferase"/>
    <property type="match status" value="1"/>
</dbReference>
<dbReference type="Gene3D" id="1.10.940.10">
    <property type="entry name" value="NusB-like"/>
    <property type="match status" value="1"/>
</dbReference>
<dbReference type="Gene3D" id="3.30.70.1170">
    <property type="entry name" value="Sun protein, domain 3"/>
    <property type="match status" value="1"/>
</dbReference>
<dbReference type="Gene3D" id="3.40.50.150">
    <property type="entry name" value="Vaccinia Virus protein VP39"/>
    <property type="match status" value="1"/>
</dbReference>
<dbReference type="InterPro" id="IPR049560">
    <property type="entry name" value="MeTrfase_RsmB-F_NOP2_cat"/>
</dbReference>
<dbReference type="InterPro" id="IPR001678">
    <property type="entry name" value="MeTrfase_RsmB-F_NOP2_dom"/>
</dbReference>
<dbReference type="InterPro" id="IPR035926">
    <property type="entry name" value="NusB-like_sf"/>
</dbReference>
<dbReference type="InterPro" id="IPR006027">
    <property type="entry name" value="NusB_RsmB_TIM44"/>
</dbReference>
<dbReference type="InterPro" id="IPR023267">
    <property type="entry name" value="RCMT"/>
</dbReference>
<dbReference type="InterPro" id="IPR004573">
    <property type="entry name" value="rRNA_ssu_MeTfrase_B"/>
</dbReference>
<dbReference type="InterPro" id="IPR054728">
    <property type="entry name" value="RsmB-like_ferredoxin"/>
</dbReference>
<dbReference type="InterPro" id="IPR048019">
    <property type="entry name" value="RsmB-like_N"/>
</dbReference>
<dbReference type="InterPro" id="IPR018314">
    <property type="entry name" value="RsmB/NOL1/NOP2-like_CS"/>
</dbReference>
<dbReference type="InterPro" id="IPR029063">
    <property type="entry name" value="SAM-dependent_MTases_sf"/>
</dbReference>
<dbReference type="NCBIfam" id="NF011494">
    <property type="entry name" value="PRK14902.1"/>
    <property type="match status" value="1"/>
</dbReference>
<dbReference type="NCBIfam" id="TIGR00563">
    <property type="entry name" value="rsmB"/>
    <property type="match status" value="1"/>
</dbReference>
<dbReference type="PANTHER" id="PTHR22807">
    <property type="entry name" value="NOP2 YEAST -RELATED NOL1/NOP2/FMU SUN DOMAIN-CONTAINING"/>
    <property type="match status" value="1"/>
</dbReference>
<dbReference type="PANTHER" id="PTHR22807:SF53">
    <property type="entry name" value="RIBOSOMAL RNA SMALL SUBUNIT METHYLTRANSFERASE B-RELATED"/>
    <property type="match status" value="1"/>
</dbReference>
<dbReference type="Pfam" id="PF01189">
    <property type="entry name" value="Methyltr_RsmB-F"/>
    <property type="match status" value="1"/>
</dbReference>
<dbReference type="Pfam" id="PF01029">
    <property type="entry name" value="NusB"/>
    <property type="match status" value="1"/>
</dbReference>
<dbReference type="Pfam" id="PF22458">
    <property type="entry name" value="RsmF-B_ferredox"/>
    <property type="match status" value="1"/>
</dbReference>
<dbReference type="PRINTS" id="PR02008">
    <property type="entry name" value="RCMTFAMILY"/>
</dbReference>
<dbReference type="SUPFAM" id="SSF48013">
    <property type="entry name" value="NusB-like"/>
    <property type="match status" value="1"/>
</dbReference>
<dbReference type="SUPFAM" id="SSF53335">
    <property type="entry name" value="S-adenosyl-L-methionine-dependent methyltransferases"/>
    <property type="match status" value="1"/>
</dbReference>
<dbReference type="PROSITE" id="PS01153">
    <property type="entry name" value="NOL1_NOP2_SUN"/>
    <property type="match status" value="1"/>
</dbReference>
<dbReference type="PROSITE" id="PS51686">
    <property type="entry name" value="SAM_MT_RSMB_NOP"/>
    <property type="match status" value="1"/>
</dbReference>
<keyword id="KW-0963">Cytoplasm</keyword>
<keyword id="KW-0489">Methyltransferase</keyword>
<keyword id="KW-1185">Reference proteome</keyword>
<keyword id="KW-0690">Ribosome biogenesis</keyword>
<keyword id="KW-0694">RNA-binding</keyword>
<keyword id="KW-0698">rRNA processing</keyword>
<keyword id="KW-0949">S-adenosyl-L-methionine</keyword>
<keyword id="KW-0808">Transferase</keyword>
<sequence length="447" mass="50274">MKKTSVRDIALEALIKLEQNQAYSNLLLKSVIKSNELSDQNRGLLTELVYGTLQNKIALDYMLKPFINKPQKVKPWVIQLLRLSLYQMEYLEKIPDRAAIHEAVEIAKIRGHKGIASFVNGVLRSIQREGVPSFDAIEDPVRRLATETSHPEWLVKEWADAYGFEAAEKICRIHLIPPKQTLRVNQMKADRAELLDQMAAEGIEVEKGDLAEDAVKLLKGTIAGTHFFQNGEVSIQDESSMLVARALDPKSDETVLDACAAPGGKSAHIAELMKNKGSVTSLDLHKHKVKLIKEAADRLGLTIIHAETMDARKAGETFENEQFDRILVDAPCSGFGVIRRKPDMKYTKKPDDSARLAEIQLSILREIAPLVKKGGTLVYSTCTMDRTENDEVIHAFIQEHPDFEPDLSLEKRLPEKVRPFVRDGRLQILPHYFGTDGFFICSMRKKG</sequence>
<protein>
    <recommendedName>
        <fullName evidence="3">Probable ribosomal RNA small subunit methyltransferase B</fullName>
        <ecNumber evidence="1">2.1.1.176</ecNumber>
    </recommendedName>
    <alternativeName>
        <fullName evidence="1">16S rRNA m5C967 methyltransferase</fullName>
    </alternativeName>
    <alternativeName>
        <fullName evidence="1">rRNA (cytosine-C(5)-)-methyltransferase RsmB</fullName>
    </alternativeName>
</protein>